<dbReference type="EC" id="3.5.3.6" evidence="1"/>
<dbReference type="EMBL" id="AE016795">
    <property type="protein sequence ID" value="AAO09906.1"/>
    <property type="molecule type" value="Genomic_DNA"/>
</dbReference>
<dbReference type="RefSeq" id="WP_011079424.1">
    <property type="nucleotide sequence ID" value="NC_004459.3"/>
</dbReference>
<dbReference type="SMR" id="Q8DCF4"/>
<dbReference type="KEGG" id="vvu:VV1_1467"/>
<dbReference type="HOGENOM" id="CLU_052662_0_0_6"/>
<dbReference type="UniPathway" id="UPA00254">
    <property type="reaction ID" value="UER00364"/>
</dbReference>
<dbReference type="Proteomes" id="UP000002275">
    <property type="component" value="Chromosome 1"/>
</dbReference>
<dbReference type="GO" id="GO:0005737">
    <property type="term" value="C:cytoplasm"/>
    <property type="evidence" value="ECO:0007669"/>
    <property type="project" value="UniProtKB-SubCell"/>
</dbReference>
<dbReference type="GO" id="GO:0016990">
    <property type="term" value="F:arginine deiminase activity"/>
    <property type="evidence" value="ECO:0007669"/>
    <property type="project" value="UniProtKB-UniRule"/>
</dbReference>
<dbReference type="GO" id="GO:0019547">
    <property type="term" value="P:arginine catabolic process to ornithine"/>
    <property type="evidence" value="ECO:0007669"/>
    <property type="project" value="UniProtKB-UniRule"/>
</dbReference>
<dbReference type="GO" id="GO:0019546">
    <property type="term" value="P:arginine deiminase pathway"/>
    <property type="evidence" value="ECO:0007669"/>
    <property type="project" value="TreeGrafter"/>
</dbReference>
<dbReference type="Gene3D" id="1.10.3930.10">
    <property type="entry name" value="Arginine deiminase"/>
    <property type="match status" value="1"/>
</dbReference>
<dbReference type="Gene3D" id="3.75.10.10">
    <property type="entry name" value="L-arginine/glycine Amidinotransferase, Chain A"/>
    <property type="match status" value="1"/>
</dbReference>
<dbReference type="HAMAP" id="MF_00242">
    <property type="entry name" value="Arg_deiminase"/>
    <property type="match status" value="1"/>
</dbReference>
<dbReference type="InterPro" id="IPR003876">
    <property type="entry name" value="Arg_deiminase"/>
</dbReference>
<dbReference type="NCBIfam" id="TIGR01078">
    <property type="entry name" value="arcA"/>
    <property type="match status" value="1"/>
</dbReference>
<dbReference type="NCBIfam" id="NF002381">
    <property type="entry name" value="PRK01388.1"/>
    <property type="match status" value="1"/>
</dbReference>
<dbReference type="PANTHER" id="PTHR47271">
    <property type="entry name" value="ARGININE DEIMINASE"/>
    <property type="match status" value="1"/>
</dbReference>
<dbReference type="PANTHER" id="PTHR47271:SF2">
    <property type="entry name" value="ARGININE DEIMINASE"/>
    <property type="match status" value="1"/>
</dbReference>
<dbReference type="Pfam" id="PF02274">
    <property type="entry name" value="ADI"/>
    <property type="match status" value="1"/>
</dbReference>
<dbReference type="PIRSF" id="PIRSF006356">
    <property type="entry name" value="Arg_deiminase"/>
    <property type="match status" value="1"/>
</dbReference>
<dbReference type="PRINTS" id="PR01466">
    <property type="entry name" value="ARGDEIMINASE"/>
</dbReference>
<dbReference type="SUPFAM" id="SSF55909">
    <property type="entry name" value="Pentein"/>
    <property type="match status" value="1"/>
</dbReference>
<comment type="catalytic activity">
    <reaction evidence="1">
        <text>L-arginine + H2O = L-citrulline + NH4(+)</text>
        <dbReference type="Rhea" id="RHEA:19597"/>
        <dbReference type="ChEBI" id="CHEBI:15377"/>
        <dbReference type="ChEBI" id="CHEBI:28938"/>
        <dbReference type="ChEBI" id="CHEBI:32682"/>
        <dbReference type="ChEBI" id="CHEBI:57743"/>
        <dbReference type="EC" id="3.5.3.6"/>
    </reaction>
</comment>
<comment type="pathway">
    <text evidence="1">Amino-acid degradation; L-arginine degradation via ADI pathway; carbamoyl phosphate from L-arginine: step 1/2.</text>
</comment>
<comment type="subcellular location">
    <subcellularLocation>
        <location evidence="1">Cytoplasm</location>
    </subcellularLocation>
</comment>
<comment type="similarity">
    <text evidence="1">Belongs to the arginine deiminase family.</text>
</comment>
<name>ARCA_VIBVU</name>
<feature type="chain" id="PRO_0000182255" description="Arginine deiminase">
    <location>
        <begin position="1"/>
        <end position="406"/>
    </location>
</feature>
<feature type="active site" description="Amidino-cysteine intermediate" evidence="1">
    <location>
        <position position="396"/>
    </location>
</feature>
<accession>Q8DCF4</accession>
<proteinExistence type="inferred from homology"/>
<organism>
    <name type="scientific">Vibrio vulnificus (strain CMCP6)</name>
    <dbReference type="NCBI Taxonomy" id="216895"/>
    <lineage>
        <taxon>Bacteria</taxon>
        <taxon>Pseudomonadati</taxon>
        <taxon>Pseudomonadota</taxon>
        <taxon>Gammaproteobacteria</taxon>
        <taxon>Vibrionales</taxon>
        <taxon>Vibrionaceae</taxon>
        <taxon>Vibrio</taxon>
    </lineage>
</organism>
<sequence>MSKLYVGSEVGQLRRVLLNRPERALTHLTPSNCHELLFDDVLLVEAAGKEHDAFADTLRQQGVEVLLLHDLMVDTLAVPEAKQWLLDVQISDFRYGPIFARDLRRYLSEMDNEHLATILLGGLAYSELPIQSASMLPRMKQPLDFVIEPLPNHLFTRDTSCWVYGGVSLNPMMKPARQRETNHLRAIYQWHPIFAGQDFIKYFGNEDLHYDNANIEGGDVLVIGKGAVLIGMSERTTPQGVENLAANLFKHGQAKEVIAIELPKHRSCMHLDTVMTHMDVDTFSVYPEIMRKDLHTWRLTPKGNGEMQVEALHNYLHAIERALGLNHLNIITTGGDSYEAEREQWNDANNVLTVKPGVVIGYERNVYTNEKYDKAGIEVLTIPGNELGRGRGGARCMSCPIERDDI</sequence>
<protein>
    <recommendedName>
        <fullName evidence="1">Arginine deiminase</fullName>
        <shortName evidence="1">ADI</shortName>
        <ecNumber evidence="1">3.5.3.6</ecNumber>
    </recommendedName>
    <alternativeName>
        <fullName evidence="1">Arginine dihydrolase</fullName>
        <shortName evidence="1">AD</shortName>
    </alternativeName>
</protein>
<keyword id="KW-0056">Arginine metabolism</keyword>
<keyword id="KW-0963">Cytoplasm</keyword>
<keyword id="KW-0378">Hydrolase</keyword>
<reference key="1">
    <citation type="submission" date="2002-12" db="EMBL/GenBank/DDBJ databases">
        <title>Complete genome sequence of Vibrio vulnificus CMCP6.</title>
        <authorList>
            <person name="Rhee J.H."/>
            <person name="Kim S.Y."/>
            <person name="Chung S.S."/>
            <person name="Kim J.J."/>
            <person name="Moon Y.H."/>
            <person name="Jeong H."/>
            <person name="Choy H.E."/>
        </authorList>
    </citation>
    <scope>NUCLEOTIDE SEQUENCE [LARGE SCALE GENOMIC DNA]</scope>
    <source>
        <strain>CMCP6</strain>
    </source>
</reference>
<evidence type="ECO:0000255" key="1">
    <source>
        <dbReference type="HAMAP-Rule" id="MF_00242"/>
    </source>
</evidence>
<gene>
    <name evidence="1" type="primary">arcA</name>
    <name type="ordered locus">VV1_1467</name>
</gene>